<dbReference type="EMBL" id="CP000712">
    <property type="protein sequence ID" value="ABQ76675.1"/>
    <property type="molecule type" value="Genomic_DNA"/>
</dbReference>
<dbReference type="SMR" id="A5VXR5"/>
<dbReference type="KEGG" id="ppf:Pput_0505"/>
<dbReference type="eggNOG" id="COG1841">
    <property type="taxonomic scope" value="Bacteria"/>
</dbReference>
<dbReference type="HOGENOM" id="CLU_131047_1_4_6"/>
<dbReference type="GO" id="GO:0022625">
    <property type="term" value="C:cytosolic large ribosomal subunit"/>
    <property type="evidence" value="ECO:0007669"/>
    <property type="project" value="TreeGrafter"/>
</dbReference>
<dbReference type="GO" id="GO:0003735">
    <property type="term" value="F:structural constituent of ribosome"/>
    <property type="evidence" value="ECO:0007669"/>
    <property type="project" value="InterPro"/>
</dbReference>
<dbReference type="GO" id="GO:0006412">
    <property type="term" value="P:translation"/>
    <property type="evidence" value="ECO:0007669"/>
    <property type="project" value="UniProtKB-UniRule"/>
</dbReference>
<dbReference type="CDD" id="cd01658">
    <property type="entry name" value="Ribosomal_L30"/>
    <property type="match status" value="1"/>
</dbReference>
<dbReference type="FunFam" id="3.30.1390.20:FF:000001">
    <property type="entry name" value="50S ribosomal protein L30"/>
    <property type="match status" value="1"/>
</dbReference>
<dbReference type="Gene3D" id="3.30.1390.20">
    <property type="entry name" value="Ribosomal protein L30, ferredoxin-like fold domain"/>
    <property type="match status" value="1"/>
</dbReference>
<dbReference type="HAMAP" id="MF_01371_B">
    <property type="entry name" value="Ribosomal_uL30_B"/>
    <property type="match status" value="1"/>
</dbReference>
<dbReference type="InterPro" id="IPR036919">
    <property type="entry name" value="Ribo_uL30_ferredoxin-like_sf"/>
</dbReference>
<dbReference type="InterPro" id="IPR005996">
    <property type="entry name" value="Ribosomal_uL30_bac-type"/>
</dbReference>
<dbReference type="InterPro" id="IPR016082">
    <property type="entry name" value="Ribosomal_uL30_ferredoxin-like"/>
</dbReference>
<dbReference type="NCBIfam" id="TIGR01308">
    <property type="entry name" value="rpmD_bact"/>
    <property type="match status" value="1"/>
</dbReference>
<dbReference type="PANTHER" id="PTHR15892:SF2">
    <property type="entry name" value="LARGE RIBOSOMAL SUBUNIT PROTEIN UL30M"/>
    <property type="match status" value="1"/>
</dbReference>
<dbReference type="PANTHER" id="PTHR15892">
    <property type="entry name" value="MITOCHONDRIAL RIBOSOMAL PROTEIN L30"/>
    <property type="match status" value="1"/>
</dbReference>
<dbReference type="Pfam" id="PF00327">
    <property type="entry name" value="Ribosomal_L30"/>
    <property type="match status" value="1"/>
</dbReference>
<dbReference type="PIRSF" id="PIRSF002211">
    <property type="entry name" value="Ribosomal_L30_bac-type"/>
    <property type="match status" value="1"/>
</dbReference>
<dbReference type="SUPFAM" id="SSF55129">
    <property type="entry name" value="Ribosomal protein L30p/L7e"/>
    <property type="match status" value="1"/>
</dbReference>
<reference key="1">
    <citation type="submission" date="2007-05" db="EMBL/GenBank/DDBJ databases">
        <title>Complete sequence of Pseudomonas putida F1.</title>
        <authorList>
            <consortium name="US DOE Joint Genome Institute"/>
            <person name="Copeland A."/>
            <person name="Lucas S."/>
            <person name="Lapidus A."/>
            <person name="Barry K."/>
            <person name="Detter J.C."/>
            <person name="Glavina del Rio T."/>
            <person name="Hammon N."/>
            <person name="Israni S."/>
            <person name="Dalin E."/>
            <person name="Tice H."/>
            <person name="Pitluck S."/>
            <person name="Chain P."/>
            <person name="Malfatti S."/>
            <person name="Shin M."/>
            <person name="Vergez L."/>
            <person name="Schmutz J."/>
            <person name="Larimer F."/>
            <person name="Land M."/>
            <person name="Hauser L."/>
            <person name="Kyrpides N."/>
            <person name="Lykidis A."/>
            <person name="Parales R."/>
            <person name="Richardson P."/>
        </authorList>
    </citation>
    <scope>NUCLEOTIDE SEQUENCE [LARGE SCALE GENOMIC DNA]</scope>
    <source>
        <strain>ATCC 700007 / DSM 6899 / JCM 31910 / BCRC 17059 / LMG 24140 / F1</strain>
    </source>
</reference>
<protein>
    <recommendedName>
        <fullName evidence="1">Large ribosomal subunit protein uL30</fullName>
    </recommendedName>
    <alternativeName>
        <fullName evidence="2">50S ribosomal protein L30</fullName>
    </alternativeName>
</protein>
<name>RL30_PSEP1</name>
<organism>
    <name type="scientific">Pseudomonas putida (strain ATCC 700007 / DSM 6899 / JCM 31910 / BCRC 17059 / LMG 24140 / F1)</name>
    <dbReference type="NCBI Taxonomy" id="351746"/>
    <lineage>
        <taxon>Bacteria</taxon>
        <taxon>Pseudomonadati</taxon>
        <taxon>Pseudomonadota</taxon>
        <taxon>Gammaproteobacteria</taxon>
        <taxon>Pseudomonadales</taxon>
        <taxon>Pseudomonadaceae</taxon>
        <taxon>Pseudomonas</taxon>
    </lineage>
</organism>
<accession>A5VXR5</accession>
<feature type="chain" id="PRO_1000056094" description="Large ribosomal subunit protein uL30">
    <location>
        <begin position="1"/>
        <end position="58"/>
    </location>
</feature>
<evidence type="ECO:0000255" key="1">
    <source>
        <dbReference type="HAMAP-Rule" id="MF_01371"/>
    </source>
</evidence>
<evidence type="ECO:0000305" key="2"/>
<keyword id="KW-0687">Ribonucleoprotein</keyword>
<keyword id="KW-0689">Ribosomal protein</keyword>
<gene>
    <name evidence="1" type="primary">rpmD</name>
    <name type="ordered locus">Pput_0505</name>
</gene>
<proteinExistence type="inferred from homology"/>
<sequence>MATVKVTLIKSVSGRLPNHKLCVKGLGLRRIGHTVEVQDTPENRGMINKAYYMLKVEG</sequence>
<comment type="subunit">
    <text evidence="1">Part of the 50S ribosomal subunit.</text>
</comment>
<comment type="similarity">
    <text evidence="1">Belongs to the universal ribosomal protein uL30 family.</text>
</comment>